<gene>
    <name evidence="1" type="primary">nadX</name>
    <name type="ordered locus">Mhun_2354</name>
</gene>
<dbReference type="EC" id="1.4.1.21" evidence="1"/>
<dbReference type="EMBL" id="CP000254">
    <property type="protein sequence ID" value="ABD42058.1"/>
    <property type="molecule type" value="Genomic_DNA"/>
</dbReference>
<dbReference type="RefSeq" id="WP_011449316.1">
    <property type="nucleotide sequence ID" value="NC_007796.1"/>
</dbReference>
<dbReference type="SMR" id="Q2FSK9"/>
<dbReference type="FunCoup" id="Q2FSK9">
    <property type="interactions" value="90"/>
</dbReference>
<dbReference type="STRING" id="323259.Mhun_2354"/>
<dbReference type="EnsemblBacteria" id="ABD42058">
    <property type="protein sequence ID" value="ABD42058"/>
    <property type="gene ID" value="Mhun_2354"/>
</dbReference>
<dbReference type="GeneID" id="3923251"/>
<dbReference type="KEGG" id="mhu:Mhun_2354"/>
<dbReference type="eggNOG" id="arCOG00254">
    <property type="taxonomic scope" value="Archaea"/>
</dbReference>
<dbReference type="HOGENOM" id="CLU_089550_0_0_2"/>
<dbReference type="InParanoid" id="Q2FSK9"/>
<dbReference type="OrthoDB" id="15415at2157"/>
<dbReference type="UniPathway" id="UPA00253">
    <property type="reaction ID" value="UER00456"/>
</dbReference>
<dbReference type="Proteomes" id="UP000001941">
    <property type="component" value="Chromosome"/>
</dbReference>
<dbReference type="GO" id="GO:0033735">
    <property type="term" value="F:aspartate dehydrogenase activity"/>
    <property type="evidence" value="ECO:0007669"/>
    <property type="project" value="UniProtKB-EC"/>
</dbReference>
<dbReference type="GO" id="GO:0051287">
    <property type="term" value="F:NAD binding"/>
    <property type="evidence" value="ECO:0007669"/>
    <property type="project" value="UniProtKB-UniRule"/>
</dbReference>
<dbReference type="GO" id="GO:0050661">
    <property type="term" value="F:NADP binding"/>
    <property type="evidence" value="ECO:0007669"/>
    <property type="project" value="UniProtKB-UniRule"/>
</dbReference>
<dbReference type="GO" id="GO:0016639">
    <property type="term" value="F:oxidoreductase activity, acting on the CH-NH2 group of donors, NAD or NADP as acceptor"/>
    <property type="evidence" value="ECO:0007669"/>
    <property type="project" value="UniProtKB-UniRule"/>
</dbReference>
<dbReference type="GO" id="GO:0009435">
    <property type="term" value="P:NAD biosynthetic process"/>
    <property type="evidence" value="ECO:0007669"/>
    <property type="project" value="UniProtKB-UniRule"/>
</dbReference>
<dbReference type="Gene3D" id="3.30.360.10">
    <property type="entry name" value="Dihydrodipicolinate Reductase, domain 2"/>
    <property type="match status" value="1"/>
</dbReference>
<dbReference type="Gene3D" id="3.40.50.720">
    <property type="entry name" value="NAD(P)-binding Rossmann-like Domain"/>
    <property type="match status" value="1"/>
</dbReference>
<dbReference type="HAMAP" id="MF_01265">
    <property type="entry name" value="NadX"/>
    <property type="match status" value="1"/>
</dbReference>
<dbReference type="InterPro" id="IPR005106">
    <property type="entry name" value="Asp/hSer_DH_NAD-bd"/>
</dbReference>
<dbReference type="InterPro" id="IPR002811">
    <property type="entry name" value="Asp_DH"/>
</dbReference>
<dbReference type="InterPro" id="IPR022487">
    <property type="entry name" value="Asp_DH_arc"/>
</dbReference>
<dbReference type="InterPro" id="IPR020626">
    <property type="entry name" value="Asp_DH_prok"/>
</dbReference>
<dbReference type="InterPro" id="IPR011182">
    <property type="entry name" value="L-Asp_DH"/>
</dbReference>
<dbReference type="InterPro" id="IPR036291">
    <property type="entry name" value="NAD(P)-bd_dom_sf"/>
</dbReference>
<dbReference type="NCBIfam" id="TIGR03855">
    <property type="entry name" value="NAD_NadX"/>
    <property type="match status" value="1"/>
</dbReference>
<dbReference type="NCBIfam" id="NF009829">
    <property type="entry name" value="PRK13303.1-4"/>
    <property type="match status" value="1"/>
</dbReference>
<dbReference type="NCBIfam" id="NF009830">
    <property type="entry name" value="PRK13304.1"/>
    <property type="match status" value="1"/>
</dbReference>
<dbReference type="PANTHER" id="PTHR31873:SF6">
    <property type="entry name" value="ASPARTATE DEHYDROGENASE DOMAIN-CONTAINING PROTEIN"/>
    <property type="match status" value="1"/>
</dbReference>
<dbReference type="PANTHER" id="PTHR31873">
    <property type="entry name" value="L-ASPARTATE DEHYDROGENASE-RELATED"/>
    <property type="match status" value="1"/>
</dbReference>
<dbReference type="Pfam" id="PF01958">
    <property type="entry name" value="Asp_DH_C"/>
    <property type="match status" value="1"/>
</dbReference>
<dbReference type="Pfam" id="PF03447">
    <property type="entry name" value="NAD_binding_3"/>
    <property type="match status" value="1"/>
</dbReference>
<dbReference type="PIRSF" id="PIRSF005227">
    <property type="entry name" value="Asp_dh_NAD_syn"/>
    <property type="match status" value="1"/>
</dbReference>
<dbReference type="SUPFAM" id="SSF55347">
    <property type="entry name" value="Glyceraldehyde-3-phosphate dehydrogenase-like, C-terminal domain"/>
    <property type="match status" value="1"/>
</dbReference>
<dbReference type="SUPFAM" id="SSF51735">
    <property type="entry name" value="NAD(P)-binding Rossmann-fold domains"/>
    <property type="match status" value="1"/>
</dbReference>
<accession>Q2FSK9</accession>
<sequence>MVRIGLLGCGNVGRIIATHQDGFTVEALFDRLPDHAEELARMCGAPAYADFQEFISQDFDICVEAASVLAVREYAPKILENGKHVLILSVGALSDTNFRKILLDVARSQGKKIHIPSGAIMGLDNLKVGGISRIDSVLLRTTKSPASLGMQVSHRTLAFRGKANECIKQFPKNINVSVALALAVHHDVDVELWADPEVDRNIHDIFVSGEFGEASIRVVNHPSPDNPATSYLAALSVLSLLKNLDSPLVIGS</sequence>
<reference key="1">
    <citation type="journal article" date="2016" name="Stand. Genomic Sci.">
        <title>Complete genome sequence of Methanospirillum hungatei type strain JF1.</title>
        <authorList>
            <person name="Gunsalus R.P."/>
            <person name="Cook L.E."/>
            <person name="Crable B."/>
            <person name="Rohlin L."/>
            <person name="McDonald E."/>
            <person name="Mouttaki H."/>
            <person name="Sieber J.R."/>
            <person name="Poweleit N."/>
            <person name="Zhou H."/>
            <person name="Lapidus A.L."/>
            <person name="Daligault H.E."/>
            <person name="Land M."/>
            <person name="Gilna P."/>
            <person name="Ivanova N."/>
            <person name="Kyrpides N."/>
            <person name="Culley D.E."/>
            <person name="McInerney M.J."/>
        </authorList>
    </citation>
    <scope>NUCLEOTIDE SEQUENCE [LARGE SCALE GENOMIC DNA]</scope>
    <source>
        <strain>ATCC 27890 / DSM 864 / NBRC 100397 / JF-1</strain>
    </source>
</reference>
<evidence type="ECO:0000255" key="1">
    <source>
        <dbReference type="HAMAP-Rule" id="MF_01265"/>
    </source>
</evidence>
<protein>
    <recommendedName>
        <fullName evidence="1">L-aspartate dehydrogenase</fullName>
        <ecNumber evidence="1">1.4.1.21</ecNumber>
    </recommendedName>
</protein>
<name>ASPD_METHJ</name>
<keyword id="KW-0520">NAD</keyword>
<keyword id="KW-0521">NADP</keyword>
<keyword id="KW-0560">Oxidoreductase</keyword>
<keyword id="KW-0662">Pyridine nucleotide biosynthesis</keyword>
<keyword id="KW-1185">Reference proteome</keyword>
<proteinExistence type="inferred from homology"/>
<organism>
    <name type="scientific">Methanospirillum hungatei JF-1 (strain ATCC 27890 / DSM 864 / NBRC 100397 / JF-1)</name>
    <dbReference type="NCBI Taxonomy" id="323259"/>
    <lineage>
        <taxon>Archaea</taxon>
        <taxon>Methanobacteriati</taxon>
        <taxon>Methanobacteriota</taxon>
        <taxon>Stenosarchaea group</taxon>
        <taxon>Methanomicrobia</taxon>
        <taxon>Methanomicrobiales</taxon>
        <taxon>Methanospirillaceae</taxon>
        <taxon>Methanospirillum</taxon>
    </lineage>
</organism>
<comment type="function">
    <text evidence="1">Specifically catalyzes the NAD or NADP-dependent dehydrogenation of L-aspartate to iminoaspartate.</text>
</comment>
<comment type="catalytic activity">
    <reaction evidence="1">
        <text>L-aspartate + NADP(+) + H2O = oxaloacetate + NH4(+) + NADPH + H(+)</text>
        <dbReference type="Rhea" id="RHEA:11784"/>
        <dbReference type="ChEBI" id="CHEBI:15377"/>
        <dbReference type="ChEBI" id="CHEBI:15378"/>
        <dbReference type="ChEBI" id="CHEBI:16452"/>
        <dbReference type="ChEBI" id="CHEBI:28938"/>
        <dbReference type="ChEBI" id="CHEBI:29991"/>
        <dbReference type="ChEBI" id="CHEBI:57783"/>
        <dbReference type="ChEBI" id="CHEBI:58349"/>
        <dbReference type="EC" id="1.4.1.21"/>
    </reaction>
</comment>
<comment type="catalytic activity">
    <reaction evidence="1">
        <text>L-aspartate + NAD(+) + H2O = oxaloacetate + NH4(+) + NADH + H(+)</text>
        <dbReference type="Rhea" id="RHEA:11788"/>
        <dbReference type="ChEBI" id="CHEBI:15377"/>
        <dbReference type="ChEBI" id="CHEBI:15378"/>
        <dbReference type="ChEBI" id="CHEBI:16452"/>
        <dbReference type="ChEBI" id="CHEBI:28938"/>
        <dbReference type="ChEBI" id="CHEBI:29991"/>
        <dbReference type="ChEBI" id="CHEBI:57540"/>
        <dbReference type="ChEBI" id="CHEBI:57945"/>
        <dbReference type="EC" id="1.4.1.21"/>
    </reaction>
</comment>
<comment type="pathway">
    <text evidence="1">Cofactor biosynthesis; NAD(+) biosynthesis; iminoaspartate from L-aspartate (dehydrogenase route): step 1/1.</text>
</comment>
<comment type="miscellaneous">
    <text evidence="1">The iminoaspartate product is unstable in aqueous solution and can decompose to oxaloacetate and ammonia.</text>
</comment>
<comment type="similarity">
    <text evidence="1">Belongs to the L-aspartate dehydrogenase family.</text>
</comment>
<feature type="chain" id="PRO_1000067305" description="L-aspartate dehydrogenase">
    <location>
        <begin position="1"/>
        <end position="252"/>
    </location>
</feature>
<feature type="active site" evidence="1">
    <location>
        <position position="203"/>
    </location>
</feature>
<feature type="binding site" evidence="1">
    <location>
        <position position="119"/>
    </location>
    <ligand>
        <name>NAD(+)</name>
        <dbReference type="ChEBI" id="CHEBI:57540"/>
    </ligand>
</feature>
<feature type="binding site" evidence="1">
    <location>
        <position position="175"/>
    </location>
    <ligand>
        <name>NAD(+)</name>
        <dbReference type="ChEBI" id="CHEBI:57540"/>
    </ligand>
</feature>